<feature type="chain" id="PRO_1000005342" description="Small ribosomal subunit protein bS6">
    <location>
        <begin position="1"/>
        <end position="118"/>
    </location>
</feature>
<evidence type="ECO:0000255" key="1">
    <source>
        <dbReference type="HAMAP-Rule" id="MF_00360"/>
    </source>
</evidence>
<evidence type="ECO:0000305" key="2"/>
<protein>
    <recommendedName>
        <fullName evidence="1">Small ribosomal subunit protein bS6</fullName>
    </recommendedName>
    <alternativeName>
        <fullName evidence="2">30S ribosomal protein S6</fullName>
    </alternativeName>
</protein>
<dbReference type="EMBL" id="AM420293">
    <property type="protein sequence ID" value="CAM06507.1"/>
    <property type="molecule type" value="Genomic_DNA"/>
</dbReference>
<dbReference type="RefSeq" id="WP_011875325.1">
    <property type="nucleotide sequence ID" value="NC_009142.1"/>
</dbReference>
<dbReference type="SMR" id="A4FR32"/>
<dbReference type="STRING" id="405948.SACE_7351"/>
<dbReference type="KEGG" id="sen:SACE_7351"/>
<dbReference type="eggNOG" id="COG0360">
    <property type="taxonomic scope" value="Bacteria"/>
</dbReference>
<dbReference type="HOGENOM" id="CLU_113441_5_3_11"/>
<dbReference type="OrthoDB" id="9812702at2"/>
<dbReference type="Proteomes" id="UP000006728">
    <property type="component" value="Chromosome"/>
</dbReference>
<dbReference type="GO" id="GO:0005737">
    <property type="term" value="C:cytoplasm"/>
    <property type="evidence" value="ECO:0007669"/>
    <property type="project" value="UniProtKB-ARBA"/>
</dbReference>
<dbReference type="GO" id="GO:1990904">
    <property type="term" value="C:ribonucleoprotein complex"/>
    <property type="evidence" value="ECO:0007669"/>
    <property type="project" value="UniProtKB-KW"/>
</dbReference>
<dbReference type="GO" id="GO:0005840">
    <property type="term" value="C:ribosome"/>
    <property type="evidence" value="ECO:0007669"/>
    <property type="project" value="UniProtKB-KW"/>
</dbReference>
<dbReference type="GO" id="GO:0070181">
    <property type="term" value="F:small ribosomal subunit rRNA binding"/>
    <property type="evidence" value="ECO:0007669"/>
    <property type="project" value="TreeGrafter"/>
</dbReference>
<dbReference type="GO" id="GO:0003735">
    <property type="term" value="F:structural constituent of ribosome"/>
    <property type="evidence" value="ECO:0007669"/>
    <property type="project" value="InterPro"/>
</dbReference>
<dbReference type="GO" id="GO:0006412">
    <property type="term" value="P:translation"/>
    <property type="evidence" value="ECO:0007669"/>
    <property type="project" value="UniProtKB-UniRule"/>
</dbReference>
<dbReference type="CDD" id="cd00473">
    <property type="entry name" value="bS6"/>
    <property type="match status" value="1"/>
</dbReference>
<dbReference type="FunFam" id="3.30.70.60:FF:000002">
    <property type="entry name" value="30S ribosomal protein S6"/>
    <property type="match status" value="1"/>
</dbReference>
<dbReference type="Gene3D" id="3.30.70.60">
    <property type="match status" value="1"/>
</dbReference>
<dbReference type="HAMAP" id="MF_00360">
    <property type="entry name" value="Ribosomal_bS6"/>
    <property type="match status" value="1"/>
</dbReference>
<dbReference type="InterPro" id="IPR000529">
    <property type="entry name" value="Ribosomal_bS6"/>
</dbReference>
<dbReference type="InterPro" id="IPR035980">
    <property type="entry name" value="Ribosomal_bS6_sf"/>
</dbReference>
<dbReference type="InterPro" id="IPR020814">
    <property type="entry name" value="Ribosomal_S6_plastid/chlpt"/>
</dbReference>
<dbReference type="InterPro" id="IPR014717">
    <property type="entry name" value="Transl_elong_EF1B/ribsomal_bS6"/>
</dbReference>
<dbReference type="NCBIfam" id="TIGR00166">
    <property type="entry name" value="S6"/>
    <property type="match status" value="1"/>
</dbReference>
<dbReference type="PANTHER" id="PTHR21011">
    <property type="entry name" value="MITOCHONDRIAL 28S RIBOSOMAL PROTEIN S6"/>
    <property type="match status" value="1"/>
</dbReference>
<dbReference type="PANTHER" id="PTHR21011:SF1">
    <property type="entry name" value="SMALL RIBOSOMAL SUBUNIT PROTEIN BS6M"/>
    <property type="match status" value="1"/>
</dbReference>
<dbReference type="Pfam" id="PF01250">
    <property type="entry name" value="Ribosomal_S6"/>
    <property type="match status" value="1"/>
</dbReference>
<dbReference type="SUPFAM" id="SSF54995">
    <property type="entry name" value="Ribosomal protein S6"/>
    <property type="match status" value="1"/>
</dbReference>
<accession>A4FR32</accession>
<gene>
    <name evidence="1" type="primary">rpsF</name>
    <name type="ordered locus">SACE_7351</name>
</gene>
<reference key="1">
    <citation type="journal article" date="2007" name="Nat. Biotechnol.">
        <title>Complete genome sequence of the erythromycin-producing bacterium Saccharopolyspora erythraea NRRL23338.</title>
        <authorList>
            <person name="Oliynyk M."/>
            <person name="Samborskyy M."/>
            <person name="Lester J.B."/>
            <person name="Mironenko T."/>
            <person name="Scott N."/>
            <person name="Dickens S."/>
            <person name="Haydock S.F."/>
            <person name="Leadlay P.F."/>
        </authorList>
    </citation>
    <scope>NUCLEOTIDE SEQUENCE [LARGE SCALE GENOMIC DNA]</scope>
    <source>
        <strain>ATCC 11635 / DSM 40517 / JCM 4748 / NBRC 13426 / NCIMB 8594 / NRRL 2338</strain>
    </source>
</reference>
<name>RS6_SACEN</name>
<proteinExistence type="inferred from homology"/>
<sequence>MRHYELMVILDPSLDERTVAPSLENFLNVIRNDGGSVEKVDVWGRRRLAYEIDKQAEGIYVVLDLNSEPASVKELDRQLNLNETVLRTKVLRRVVEPRKAARVARAAAKAKNRPEASV</sequence>
<comment type="function">
    <text evidence="1">Binds together with bS18 to 16S ribosomal RNA.</text>
</comment>
<comment type="similarity">
    <text evidence="1">Belongs to the bacterial ribosomal protein bS6 family.</text>
</comment>
<keyword id="KW-1185">Reference proteome</keyword>
<keyword id="KW-0687">Ribonucleoprotein</keyword>
<keyword id="KW-0689">Ribosomal protein</keyword>
<keyword id="KW-0694">RNA-binding</keyword>
<keyword id="KW-0699">rRNA-binding</keyword>
<organism>
    <name type="scientific">Saccharopolyspora erythraea (strain ATCC 11635 / DSM 40517 / JCM 4748 / NBRC 13426 / NCIMB 8594 / NRRL 2338)</name>
    <dbReference type="NCBI Taxonomy" id="405948"/>
    <lineage>
        <taxon>Bacteria</taxon>
        <taxon>Bacillati</taxon>
        <taxon>Actinomycetota</taxon>
        <taxon>Actinomycetes</taxon>
        <taxon>Pseudonocardiales</taxon>
        <taxon>Pseudonocardiaceae</taxon>
        <taxon>Saccharopolyspora</taxon>
    </lineage>
</organism>